<evidence type="ECO:0000255" key="1"/>
<evidence type="ECO:0000269" key="2">
    <source>
    </source>
</evidence>
<evidence type="ECO:0000269" key="3">
    <source>
    </source>
</evidence>
<evidence type="ECO:0000269" key="4">
    <source>
    </source>
</evidence>
<evidence type="ECO:0000269" key="5">
    <source ref="4"/>
</evidence>
<evidence type="ECO:0000303" key="6">
    <source>
    </source>
</evidence>
<evidence type="ECO:0000305" key="7"/>
<evidence type="ECO:0000312" key="8">
    <source>
        <dbReference type="Araport" id="AT1G44000"/>
    </source>
</evidence>
<evidence type="ECO:0000312" key="9">
    <source>
        <dbReference type="EMBL" id="AAF79680.1"/>
    </source>
</evidence>
<feature type="transit peptide" description="Chloroplast" evidence="1">
    <location>
        <begin position="1"/>
        <end position="45"/>
    </location>
</feature>
<feature type="chain" id="PRO_0000425233" description="Magnesium dechelatase SGRL, chloroplastic">
    <location>
        <begin position="46"/>
        <end position="260"/>
    </location>
</feature>
<gene>
    <name evidence="6" type="primary">SGRL</name>
    <name evidence="8" type="ordered locus">At1g44000</name>
    <name evidence="9" type="ORF">F9C16.20</name>
</gene>
<organism>
    <name type="scientific">Arabidopsis thaliana</name>
    <name type="common">Mouse-ear cress</name>
    <dbReference type="NCBI Taxonomy" id="3702"/>
    <lineage>
        <taxon>Eukaryota</taxon>
        <taxon>Viridiplantae</taxon>
        <taxon>Streptophyta</taxon>
        <taxon>Embryophyta</taxon>
        <taxon>Tracheophyta</taxon>
        <taxon>Spermatophyta</taxon>
        <taxon>Magnoliopsida</taxon>
        <taxon>eudicotyledons</taxon>
        <taxon>Gunneridae</taxon>
        <taxon>Pentapetalae</taxon>
        <taxon>rosids</taxon>
        <taxon>malvids</taxon>
        <taxon>Brassicales</taxon>
        <taxon>Brassicaceae</taxon>
        <taxon>Camelineae</taxon>
        <taxon>Arabidopsis</taxon>
    </lineage>
</organism>
<sequence length="260" mass="29892">MACYIVPYYHHPVLSHPNREIFSHRHHHHHRFCNNLLNRRISVPRSSAISDGGVSYNTLVSEAVRLLVPQANFDSSKLKVEFLGELLENKSNGGIITPRTYILSHCDFTANLTLTISNVINLDQLEGWYKKDDVVAEWKKVNDELRLHIHCCVSGMSLLQDVAAELRYHIFSKELPLVLKAVVHGDSVMFRENPELMDAYVWVYFHSSTPKYNRIECWGPLKDAAKGKQQGNHQGFLSSTTSRKLIRHKSIFHTLFTFLL</sequence>
<proteinExistence type="evidence at protein level"/>
<keyword id="KW-0881">Chlorophyll catabolism</keyword>
<keyword id="KW-0150">Chloroplast</keyword>
<keyword id="KW-0456">Lyase</keyword>
<keyword id="KW-0934">Plastid</keyword>
<keyword id="KW-1185">Reference proteome</keyword>
<keyword id="KW-0346">Stress response</keyword>
<keyword id="KW-0793">Thylakoid</keyword>
<keyword id="KW-0809">Transit peptide</keyword>
<reference key="1">
    <citation type="journal article" date="2000" name="Nature">
        <title>Sequence and analysis of chromosome 1 of the plant Arabidopsis thaliana.</title>
        <authorList>
            <person name="Theologis A."/>
            <person name="Ecker J.R."/>
            <person name="Palm C.J."/>
            <person name="Federspiel N.A."/>
            <person name="Kaul S."/>
            <person name="White O."/>
            <person name="Alonso J."/>
            <person name="Altafi H."/>
            <person name="Araujo R."/>
            <person name="Bowman C.L."/>
            <person name="Brooks S.Y."/>
            <person name="Buehler E."/>
            <person name="Chan A."/>
            <person name="Chao Q."/>
            <person name="Chen H."/>
            <person name="Cheuk R.F."/>
            <person name="Chin C.W."/>
            <person name="Chung M.K."/>
            <person name="Conn L."/>
            <person name="Conway A.B."/>
            <person name="Conway A.R."/>
            <person name="Creasy T.H."/>
            <person name="Dewar K."/>
            <person name="Dunn P."/>
            <person name="Etgu P."/>
            <person name="Feldblyum T.V."/>
            <person name="Feng J.-D."/>
            <person name="Fong B."/>
            <person name="Fujii C.Y."/>
            <person name="Gill J.E."/>
            <person name="Goldsmith A.D."/>
            <person name="Haas B."/>
            <person name="Hansen N.F."/>
            <person name="Hughes B."/>
            <person name="Huizar L."/>
            <person name="Hunter J.L."/>
            <person name="Jenkins J."/>
            <person name="Johnson-Hopson C."/>
            <person name="Khan S."/>
            <person name="Khaykin E."/>
            <person name="Kim C.J."/>
            <person name="Koo H.L."/>
            <person name="Kremenetskaia I."/>
            <person name="Kurtz D.B."/>
            <person name="Kwan A."/>
            <person name="Lam B."/>
            <person name="Langin-Hooper S."/>
            <person name="Lee A."/>
            <person name="Lee J.M."/>
            <person name="Lenz C.A."/>
            <person name="Li J.H."/>
            <person name="Li Y.-P."/>
            <person name="Lin X."/>
            <person name="Liu S.X."/>
            <person name="Liu Z.A."/>
            <person name="Luros J.S."/>
            <person name="Maiti R."/>
            <person name="Marziali A."/>
            <person name="Militscher J."/>
            <person name="Miranda M."/>
            <person name="Nguyen M."/>
            <person name="Nierman W.C."/>
            <person name="Osborne B.I."/>
            <person name="Pai G."/>
            <person name="Peterson J."/>
            <person name="Pham P.K."/>
            <person name="Rizzo M."/>
            <person name="Rooney T."/>
            <person name="Rowley D."/>
            <person name="Sakano H."/>
            <person name="Salzberg S.L."/>
            <person name="Schwartz J.R."/>
            <person name="Shinn P."/>
            <person name="Southwick A.M."/>
            <person name="Sun H."/>
            <person name="Tallon L.J."/>
            <person name="Tambunga G."/>
            <person name="Toriumi M.J."/>
            <person name="Town C.D."/>
            <person name="Utterback T."/>
            <person name="Van Aken S."/>
            <person name="Vaysberg M."/>
            <person name="Vysotskaia V.S."/>
            <person name="Walker M."/>
            <person name="Wu D."/>
            <person name="Yu G."/>
            <person name="Fraser C.M."/>
            <person name="Venter J.C."/>
            <person name="Davis R.W."/>
        </authorList>
    </citation>
    <scope>NUCLEOTIDE SEQUENCE [LARGE SCALE GENOMIC DNA]</scope>
    <source>
        <strain>cv. Columbia</strain>
    </source>
</reference>
<reference key="2">
    <citation type="journal article" date="2017" name="Plant J.">
        <title>Araport11: a complete reannotation of the Arabidopsis thaliana reference genome.</title>
        <authorList>
            <person name="Cheng C.Y."/>
            <person name="Krishnakumar V."/>
            <person name="Chan A.P."/>
            <person name="Thibaud-Nissen F."/>
            <person name="Schobel S."/>
            <person name="Town C.D."/>
        </authorList>
    </citation>
    <scope>GENOME REANNOTATION</scope>
    <source>
        <strain>cv. Columbia</strain>
    </source>
</reference>
<reference key="3">
    <citation type="journal article" date="2003" name="Science">
        <title>Empirical analysis of transcriptional activity in the Arabidopsis genome.</title>
        <authorList>
            <person name="Yamada K."/>
            <person name="Lim J."/>
            <person name="Dale J.M."/>
            <person name="Chen H."/>
            <person name="Shinn P."/>
            <person name="Palm C.J."/>
            <person name="Southwick A.M."/>
            <person name="Wu H.C."/>
            <person name="Kim C.J."/>
            <person name="Nguyen M."/>
            <person name="Pham P.K."/>
            <person name="Cheuk R.F."/>
            <person name="Karlin-Newmann G."/>
            <person name="Liu S.X."/>
            <person name="Lam B."/>
            <person name="Sakano H."/>
            <person name="Wu T."/>
            <person name="Yu G."/>
            <person name="Miranda M."/>
            <person name="Quach H.L."/>
            <person name="Tripp M."/>
            <person name="Chang C.H."/>
            <person name="Lee J.M."/>
            <person name="Toriumi M.J."/>
            <person name="Chan M.M."/>
            <person name="Tang C.C."/>
            <person name="Onodera C.S."/>
            <person name="Deng J.M."/>
            <person name="Akiyama K."/>
            <person name="Ansari Y."/>
            <person name="Arakawa T."/>
            <person name="Banh J."/>
            <person name="Banno F."/>
            <person name="Bowser L."/>
            <person name="Brooks S.Y."/>
            <person name="Carninci P."/>
            <person name="Chao Q."/>
            <person name="Choy N."/>
            <person name="Enju A."/>
            <person name="Goldsmith A.D."/>
            <person name="Gurjal M."/>
            <person name="Hansen N.F."/>
            <person name="Hayashizaki Y."/>
            <person name="Johnson-Hopson C."/>
            <person name="Hsuan V.W."/>
            <person name="Iida K."/>
            <person name="Karnes M."/>
            <person name="Khan S."/>
            <person name="Koesema E."/>
            <person name="Ishida J."/>
            <person name="Jiang P.X."/>
            <person name="Jones T."/>
            <person name="Kawai J."/>
            <person name="Kamiya A."/>
            <person name="Meyers C."/>
            <person name="Nakajima M."/>
            <person name="Narusaka M."/>
            <person name="Seki M."/>
            <person name="Sakurai T."/>
            <person name="Satou M."/>
            <person name="Tamse R."/>
            <person name="Vaysberg M."/>
            <person name="Wallender E.K."/>
            <person name="Wong C."/>
            <person name="Yamamura Y."/>
            <person name="Yuan S."/>
            <person name="Shinozaki K."/>
            <person name="Davis R.W."/>
            <person name="Theologis A."/>
            <person name="Ecker J.R."/>
        </authorList>
    </citation>
    <scope>NUCLEOTIDE SEQUENCE [LARGE SCALE MRNA]</scope>
    <source>
        <strain>cv. Columbia</strain>
    </source>
</reference>
<reference key="4">
    <citation type="journal article" date="2009" name="Plant Sci.">
        <title>The stay-green revolution: Recent progress in deciphering the mechanisms of chlorophyll degradation in higher plants.</title>
        <authorList>
            <person name="Barry C.S."/>
        </authorList>
    </citation>
    <scope>TISSUE SPECIFICITY</scope>
</reference>
<reference key="5">
    <citation type="journal article" date="2014" name="FEBS Lett.">
        <title>Arabidopsis STAYGREEN-LIKE (SGRL) promotes abiotic stress-induced leaf yellowing during vegetative growth.</title>
        <authorList>
            <person name="Sakuraba Y."/>
            <person name="Kim D."/>
            <person name="Kim Y.S."/>
            <person name="Hoertensteiner S."/>
            <person name="Paek N.C."/>
        </authorList>
    </citation>
    <scope>FUNCTION</scope>
    <scope>INTERACTION WITH LHCII; NYC1; NOL; PAO AND RCCR</scope>
    <scope>SUBCELLULAR LOCATION</scope>
</reference>
<reference key="6">
    <citation type="journal article" date="2014" name="Mol. Plant">
        <title>Arabidopsis STAY-GREEN2 is a negative regulator of chlorophyll degradation during leaf senescence.</title>
        <authorList>
            <person name="Sakuraba Y."/>
            <person name="Park S.Y."/>
            <person name="Kim Y.S."/>
            <person name="Wang S.H."/>
            <person name="Yoo S.C."/>
            <person name="Hoertensteiner S."/>
            <person name="Paek N.C."/>
        </authorList>
    </citation>
    <scope>INDUCTION</scope>
</reference>
<reference key="7">
    <citation type="journal article" date="2016" name="Plant Cell">
        <title>Arabidopsis STAY-GREEN, Mendel's green cotyledon gene, encodes magnesium-dechelatase.</title>
        <authorList>
            <person name="Shimoda Y."/>
            <person name="Ito H."/>
            <person name="Tanaka A."/>
        </authorList>
    </citation>
    <scope>FUNCTION</scope>
    <scope>CATALYTIC ACTIVITY</scope>
</reference>
<name>SGRL_ARATH</name>
<accession>Q94AQ9</accession>
<accession>Q9LNZ8</accession>
<protein>
    <recommendedName>
        <fullName evidence="7">Magnesium dechelatase SGRL, chloroplastic</fullName>
        <ecNumber evidence="4">4.99.1.10</ecNumber>
    </recommendedName>
    <alternativeName>
        <fullName evidence="6">Protein STAY-GREEN LIKE</fullName>
    </alternativeName>
</protein>
<comment type="function">
    <text evidence="3 4">Magnesium chelatase involved in chlorophyll a degradation in the chlorophyll-protein complexes of photosystem I (PSI) and photosystem II (PSII) (PubMed:27604697). Contributes to the degradation of PSI and PSII in the thylakoid membranes (PubMed:27604697). Recombinant SGRL possesses high dechelating activity against chlorophyllide a, very low activity against chlorophyll a, and no activity against chlorophyll b (PubMed:27604697). Contributes to abiotic stress-induced chlorophyll degradation and leaf yellowing during vegetative plant growth (PubMed:25261252).</text>
</comment>
<comment type="catalytic activity">
    <reaction evidence="4">
        <text>chlorophyllide a + 2 H(+) = pheophorbide a + Mg(2+)</text>
        <dbReference type="Rhea" id="RHEA:52792"/>
        <dbReference type="ChEBI" id="CHEBI:15378"/>
        <dbReference type="ChEBI" id="CHEBI:18420"/>
        <dbReference type="ChEBI" id="CHEBI:58687"/>
        <dbReference type="ChEBI" id="CHEBI:83348"/>
        <dbReference type="EC" id="4.99.1.10"/>
    </reaction>
</comment>
<comment type="subunit">
    <text evidence="3">Interacts with the light harvesting complex II (LHCII) (PubMed:25261252). Interacts with the chlorophyll catabolic enzymes (CCEs) NYC1, NOL, PAO and RCCR (PubMed:25261252).</text>
</comment>
<comment type="subcellular location">
    <subcellularLocation>
        <location evidence="3">Plastid</location>
        <location evidence="3">Chloroplast thylakoid</location>
    </subcellularLocation>
</comment>
<comment type="tissue specificity">
    <text evidence="5">Expressed in cotyledons, pollen and young leaves.</text>
</comment>
<comment type="induction">
    <text evidence="2">Down-regulated during natural and dark-induced leaf senescence.</text>
</comment>
<comment type="similarity">
    <text evidence="7">Belongs to the staygreen family.</text>
</comment>
<comment type="sequence caution" evidence="7">
    <conflict type="erroneous gene model prediction">
        <sequence resource="EMBL-CDS" id="AAF79680"/>
    </conflict>
</comment>
<dbReference type="EC" id="4.99.1.10" evidence="4"/>
<dbReference type="EMBL" id="AC022314">
    <property type="protein sequence ID" value="AAF79680.1"/>
    <property type="status" value="ALT_SEQ"/>
    <property type="molecule type" value="Genomic_DNA"/>
</dbReference>
<dbReference type="EMBL" id="CP002684">
    <property type="protein sequence ID" value="AEE32011.1"/>
    <property type="molecule type" value="Genomic_DNA"/>
</dbReference>
<dbReference type="EMBL" id="AY045870">
    <property type="protein sequence ID" value="AAK76544.1"/>
    <property type="molecule type" value="mRNA"/>
</dbReference>
<dbReference type="EMBL" id="AY091453">
    <property type="protein sequence ID" value="AAM14392.1"/>
    <property type="molecule type" value="mRNA"/>
</dbReference>
<dbReference type="RefSeq" id="NP_564489.1">
    <property type="nucleotide sequence ID" value="NM_103526.3"/>
</dbReference>
<dbReference type="SMR" id="Q94AQ9"/>
<dbReference type="BioGRID" id="26225">
    <property type="interactions" value="8"/>
</dbReference>
<dbReference type="FunCoup" id="Q94AQ9">
    <property type="interactions" value="778"/>
</dbReference>
<dbReference type="IntAct" id="Q94AQ9">
    <property type="interactions" value="7"/>
</dbReference>
<dbReference type="MINT" id="Q94AQ9"/>
<dbReference type="STRING" id="3702.Q94AQ9"/>
<dbReference type="PaxDb" id="3702-AT1G44000.1"/>
<dbReference type="EnsemblPlants" id="AT1G44000.1">
    <property type="protein sequence ID" value="AT1G44000.1"/>
    <property type="gene ID" value="AT1G44000"/>
</dbReference>
<dbReference type="GeneID" id="841000"/>
<dbReference type="Gramene" id="AT1G44000.1">
    <property type="protein sequence ID" value="AT1G44000.1"/>
    <property type="gene ID" value="AT1G44000"/>
</dbReference>
<dbReference type="KEGG" id="ath:AT1G44000"/>
<dbReference type="Araport" id="AT1G44000"/>
<dbReference type="TAIR" id="AT1G44000">
    <property type="gene designation" value="SGRL"/>
</dbReference>
<dbReference type="eggNOG" id="ENOG502QS93">
    <property type="taxonomic scope" value="Eukaryota"/>
</dbReference>
<dbReference type="HOGENOM" id="CLU_073517_1_0_1"/>
<dbReference type="InParanoid" id="Q94AQ9"/>
<dbReference type="OMA" id="KNEMCLH"/>
<dbReference type="PhylomeDB" id="Q94AQ9"/>
<dbReference type="BioCyc" id="ARA:AT1G44000-MONOMER"/>
<dbReference type="BioCyc" id="MetaCyc:MONOMER-20119"/>
<dbReference type="PRO" id="PR:Q94AQ9"/>
<dbReference type="Proteomes" id="UP000006548">
    <property type="component" value="Chromosome 1"/>
</dbReference>
<dbReference type="ExpressionAtlas" id="Q94AQ9">
    <property type="expression patterns" value="baseline and differential"/>
</dbReference>
<dbReference type="GO" id="GO:0009534">
    <property type="term" value="C:chloroplast thylakoid"/>
    <property type="evidence" value="ECO:0007669"/>
    <property type="project" value="UniProtKB-SubCell"/>
</dbReference>
<dbReference type="GO" id="GO:0016829">
    <property type="term" value="F:lyase activity"/>
    <property type="evidence" value="ECO:0007669"/>
    <property type="project" value="UniProtKB-KW"/>
</dbReference>
<dbReference type="GO" id="GO:0015996">
    <property type="term" value="P:chlorophyll catabolic process"/>
    <property type="evidence" value="ECO:0007669"/>
    <property type="project" value="UniProtKB-KW"/>
</dbReference>
<dbReference type="GO" id="GO:0009658">
    <property type="term" value="P:chloroplast organization"/>
    <property type="evidence" value="ECO:0000315"/>
    <property type="project" value="TAIR"/>
</dbReference>
<dbReference type="InterPro" id="IPR024438">
    <property type="entry name" value="Staygreen"/>
</dbReference>
<dbReference type="PANTHER" id="PTHR31750:SF18">
    <property type="entry name" value="MAGNESIUM DECHELATASE SGRL, CHLOROPLASTIC"/>
    <property type="match status" value="1"/>
</dbReference>
<dbReference type="PANTHER" id="PTHR31750">
    <property type="entry name" value="PROTEIN STAY-GREEN 1, CHLOROPLASTIC-RELATED"/>
    <property type="match status" value="1"/>
</dbReference>
<dbReference type="Pfam" id="PF12638">
    <property type="entry name" value="Staygreen"/>
    <property type="match status" value="1"/>
</dbReference>